<name>HARA_PYRFU</name>
<accession>P61882</accession>
<accession>P58298</accession>
<accession>Q9V1T0</accession>
<reference key="1">
    <citation type="journal article" date="1999" name="Genetics">
        <title>Divergence of the hyperthermophilic archaea Pyrococcus furiosus and P. horikoshii inferred from complete genomic sequences.</title>
        <authorList>
            <person name="Maeder D.L."/>
            <person name="Weiss R.B."/>
            <person name="Dunn D.M."/>
            <person name="Cherry J.L."/>
            <person name="Gonzalez J.M."/>
            <person name="DiRuggiero J."/>
            <person name="Robb F.T."/>
        </authorList>
    </citation>
    <scope>NUCLEOTIDE SEQUENCE [LARGE SCALE GENOMIC DNA]</scope>
    <source>
        <strain>ATCC 43587 / DSM 3638 / JCM 8422 / Vc1</strain>
    </source>
</reference>
<organism>
    <name type="scientific">Pyrococcus furiosus (strain ATCC 43587 / DSM 3638 / JCM 8422 / Vc1)</name>
    <dbReference type="NCBI Taxonomy" id="186497"/>
    <lineage>
        <taxon>Archaea</taxon>
        <taxon>Methanobacteriati</taxon>
        <taxon>Methanobacteriota</taxon>
        <taxon>Thermococci</taxon>
        <taxon>Thermococcales</taxon>
        <taxon>Thermococcaceae</taxon>
        <taxon>Pyrococcus</taxon>
    </lineage>
</organism>
<comment type="function">
    <text evidence="1">Binds and compact DNA (95 to 150 base pairs) to form nucleosome-like structures that contain positive DNA supercoils. Increases the resistance of DNA to thermal denaturation (in vitro).</text>
</comment>
<comment type="subunit">
    <text evidence="1">Homodimer or heterodimer with another histone. Dimers then assemble into higher oligomers, with the DNA wrapped around the protein core (By similarity).</text>
</comment>
<comment type="subcellular location">
    <subcellularLocation>
        <location evidence="2">Cytoplasm</location>
    </subcellularLocation>
    <subcellularLocation>
        <location evidence="2">Chromosome</location>
    </subcellularLocation>
</comment>
<comment type="similarity">
    <text evidence="2">Belongs to the archaeal histone HMF family.</text>
</comment>
<sequence>MGELPIAPVDRLIRKAGAERVSEQAAKVLAEYLEEYAIEVAKKAVEFARHAGRKTVKVEDIKLAIKS</sequence>
<gene>
    <name type="ordered locus">PF1831</name>
</gene>
<evidence type="ECO:0000250" key="1">
    <source>
        <dbReference type="UniProtKB" id="P19267"/>
    </source>
</evidence>
<evidence type="ECO:0000305" key="2"/>
<proteinExistence type="inferred from homology"/>
<feature type="chain" id="PRO_0000154995" description="Archaeal histone A">
    <location>
        <begin position="1"/>
        <end position="67"/>
    </location>
</feature>
<feature type="region of interest" description="Interaction with DNA" evidence="1">
    <location>
        <begin position="20"/>
        <end position="22"/>
    </location>
</feature>
<feature type="region of interest" description="Interaction with DNA" evidence="1">
    <location>
        <begin position="54"/>
        <end position="57"/>
    </location>
</feature>
<protein>
    <recommendedName>
        <fullName>Archaeal histone A</fullName>
    </recommendedName>
    <alternativeName>
        <fullName>Archaeal histone A1</fullName>
    </alternativeName>
</protein>
<keyword id="KW-0158">Chromosome</keyword>
<keyword id="KW-0963">Cytoplasm</keyword>
<keyword id="KW-0238">DNA-binding</keyword>
<keyword id="KW-1185">Reference proteome</keyword>
<dbReference type="EMBL" id="AE009950">
    <property type="protein sequence ID" value="AAL81955.1"/>
    <property type="molecule type" value="Genomic_DNA"/>
</dbReference>
<dbReference type="RefSeq" id="WP_010867469.1">
    <property type="nucleotide sequence ID" value="NZ_CP023154.1"/>
</dbReference>
<dbReference type="SMR" id="P61882"/>
<dbReference type="STRING" id="186497.PF1831"/>
<dbReference type="PaxDb" id="186497-PF1831"/>
<dbReference type="KEGG" id="pfu:PF1831"/>
<dbReference type="PATRIC" id="fig|186497.12.peg.1902"/>
<dbReference type="eggNOG" id="arCOG02144">
    <property type="taxonomic scope" value="Archaea"/>
</dbReference>
<dbReference type="HOGENOM" id="CLU_192667_0_0_2"/>
<dbReference type="OrthoDB" id="7514at2157"/>
<dbReference type="PhylomeDB" id="P61882"/>
<dbReference type="Proteomes" id="UP000001013">
    <property type="component" value="Chromosome"/>
</dbReference>
<dbReference type="GO" id="GO:0005694">
    <property type="term" value="C:chromosome"/>
    <property type="evidence" value="ECO:0007669"/>
    <property type="project" value="UniProtKB-SubCell"/>
</dbReference>
<dbReference type="GO" id="GO:0005737">
    <property type="term" value="C:cytoplasm"/>
    <property type="evidence" value="ECO:0007669"/>
    <property type="project" value="UniProtKB-SubCell"/>
</dbReference>
<dbReference type="GO" id="GO:0003677">
    <property type="term" value="F:DNA binding"/>
    <property type="evidence" value="ECO:0007669"/>
    <property type="project" value="UniProtKB-KW"/>
</dbReference>
<dbReference type="GO" id="GO:0046982">
    <property type="term" value="F:protein heterodimerization activity"/>
    <property type="evidence" value="ECO:0007669"/>
    <property type="project" value="InterPro"/>
</dbReference>
<dbReference type="CDD" id="cd22909">
    <property type="entry name" value="HFD_archaea_histone-like"/>
    <property type="match status" value="1"/>
</dbReference>
<dbReference type="Gene3D" id="1.10.20.10">
    <property type="entry name" value="Histone, subunit A"/>
    <property type="match status" value="1"/>
</dbReference>
<dbReference type="InterPro" id="IPR050947">
    <property type="entry name" value="Archaeal_histone_HMF"/>
</dbReference>
<dbReference type="InterPro" id="IPR003958">
    <property type="entry name" value="CBFA_NFYB_domain"/>
</dbReference>
<dbReference type="InterPro" id="IPR009072">
    <property type="entry name" value="Histone-fold"/>
</dbReference>
<dbReference type="InterPro" id="IPR050004">
    <property type="entry name" value="HmfB-like"/>
</dbReference>
<dbReference type="NCBIfam" id="NF043032">
    <property type="entry name" value="archaea_histone"/>
    <property type="match status" value="1"/>
</dbReference>
<dbReference type="PANTHER" id="PTHR47828">
    <property type="entry name" value="ARCHAEAL HISTONE A"/>
    <property type="match status" value="1"/>
</dbReference>
<dbReference type="PANTHER" id="PTHR47828:SF1">
    <property type="entry name" value="ARCHAEAL HISTONE A"/>
    <property type="match status" value="1"/>
</dbReference>
<dbReference type="Pfam" id="PF00808">
    <property type="entry name" value="CBFD_NFYB_HMF"/>
    <property type="match status" value="1"/>
</dbReference>
<dbReference type="SUPFAM" id="SSF47113">
    <property type="entry name" value="Histone-fold"/>
    <property type="match status" value="1"/>
</dbReference>